<accession>B5E378</accession>
<keyword id="KW-0030">Aminoacyl-tRNA synthetase</keyword>
<keyword id="KW-0067">ATP-binding</keyword>
<keyword id="KW-0963">Cytoplasm</keyword>
<keyword id="KW-0436">Ligase</keyword>
<keyword id="KW-0547">Nucleotide-binding</keyword>
<keyword id="KW-0648">Protein biosynthesis</keyword>
<name>SYE_STRP4</name>
<comment type="function">
    <text evidence="1">Catalyzes the attachment of glutamate to tRNA(Glu) in a two-step reaction: glutamate is first activated by ATP to form Glu-AMP and then transferred to the acceptor end of tRNA(Glu).</text>
</comment>
<comment type="catalytic activity">
    <reaction evidence="1">
        <text>tRNA(Glu) + L-glutamate + ATP = L-glutamyl-tRNA(Glu) + AMP + diphosphate</text>
        <dbReference type="Rhea" id="RHEA:23540"/>
        <dbReference type="Rhea" id="RHEA-COMP:9663"/>
        <dbReference type="Rhea" id="RHEA-COMP:9680"/>
        <dbReference type="ChEBI" id="CHEBI:29985"/>
        <dbReference type="ChEBI" id="CHEBI:30616"/>
        <dbReference type="ChEBI" id="CHEBI:33019"/>
        <dbReference type="ChEBI" id="CHEBI:78442"/>
        <dbReference type="ChEBI" id="CHEBI:78520"/>
        <dbReference type="ChEBI" id="CHEBI:456215"/>
        <dbReference type="EC" id="6.1.1.17"/>
    </reaction>
</comment>
<comment type="subunit">
    <text evidence="1">Monomer.</text>
</comment>
<comment type="subcellular location">
    <subcellularLocation>
        <location evidence="1">Cytoplasm</location>
    </subcellularLocation>
</comment>
<comment type="similarity">
    <text evidence="1">Belongs to the class-I aminoacyl-tRNA synthetase family. Glutamate--tRNA ligase type 1 subfamily.</text>
</comment>
<proteinExistence type="inferred from homology"/>
<reference key="1">
    <citation type="journal article" date="2001" name="Microb. Drug Resist.">
        <title>Annotated draft genomic sequence from a Streptococcus pneumoniae type 19F clinical isolate.</title>
        <authorList>
            <person name="Dopazo J."/>
            <person name="Mendoza A."/>
            <person name="Herrero J."/>
            <person name="Caldara F."/>
            <person name="Humbert Y."/>
            <person name="Friedli L."/>
            <person name="Guerrier M."/>
            <person name="Grand-Schenk E."/>
            <person name="Gandin C."/>
            <person name="de Francesco M."/>
            <person name="Polissi A."/>
            <person name="Buell G."/>
            <person name="Feger G."/>
            <person name="Garcia E."/>
            <person name="Peitsch M."/>
            <person name="Garcia-Bustos J.F."/>
        </authorList>
    </citation>
    <scope>NUCLEOTIDE SEQUENCE [LARGE SCALE GENOMIC DNA]</scope>
    <source>
        <strain>G54</strain>
    </source>
</reference>
<reference key="2">
    <citation type="submission" date="2008-03" db="EMBL/GenBank/DDBJ databases">
        <title>Pneumococcal beta glucoside metabolism investigated by whole genome comparison.</title>
        <authorList>
            <person name="Mulas L."/>
            <person name="Trappetti C."/>
            <person name="Hakenbeck R."/>
            <person name="Iannelli F."/>
            <person name="Pozzi G."/>
            <person name="Davidsen T.M."/>
            <person name="Tettelin H."/>
            <person name="Oggioni M."/>
        </authorList>
    </citation>
    <scope>NUCLEOTIDE SEQUENCE [LARGE SCALE GENOMIC DNA]</scope>
    <source>
        <strain>G54</strain>
    </source>
</reference>
<feature type="chain" id="PRO_1000090112" description="Glutamate--tRNA ligase">
    <location>
        <begin position="1"/>
        <end position="486"/>
    </location>
</feature>
<feature type="short sequence motif" description="'HIGH' region" evidence="1">
    <location>
        <begin position="11"/>
        <end position="21"/>
    </location>
</feature>
<feature type="short sequence motif" description="'KMSKS' region" evidence="1">
    <location>
        <begin position="255"/>
        <end position="259"/>
    </location>
</feature>
<feature type="binding site" evidence="1">
    <location>
        <position position="258"/>
    </location>
    <ligand>
        <name>ATP</name>
        <dbReference type="ChEBI" id="CHEBI:30616"/>
    </ligand>
</feature>
<sequence length="486" mass="55927">MSKDIRVRYAPSPTGLLHIGNARTALFNYLYARHHGGTFLIRIEDTDRKRHVEDGERSQLENLRWLGMDWDESPESHENYRQSERLDLYQKYIDQLLAEGKAYKSYVTEEELAAERERQEVAGETPRYINEYLGMSEEEKAAYIAEREAAGIIPTVRLAVNESGIYKWHDMVKGDIEFEGGNIGGDWVIQKKDGYPTYNFAVVIDDHDMQISHVIRGDDHIANTPKQLMVYEALGWEAPEFGHMTLIINSETGKKLSKRDTNTLQFIEDYRKKGYLPEAVFNFIALLGWNPGGEDEIFSREELIKLFDENRLSKSPAAFDQKKLDWMSNDYIKNADLETIFEMAKPFLEEAGRLTDKAEKLVELYKPQMKSVDEIIPLTDLFFSDFPELTEAEREVMTGETVPTVLEAFKAKLEAMTDDEFVTENIFPQIKAVQKETGIKGKNLFMPIRIAVSGEMHGPELPDTIFLLGREKSIQHIENMLKEISK</sequence>
<gene>
    <name evidence="1" type="primary">gltX</name>
    <name type="ordered locus">SPG_2008</name>
</gene>
<evidence type="ECO:0000255" key="1">
    <source>
        <dbReference type="HAMAP-Rule" id="MF_00022"/>
    </source>
</evidence>
<protein>
    <recommendedName>
        <fullName evidence="1">Glutamate--tRNA ligase</fullName>
        <ecNumber evidence="1">6.1.1.17</ecNumber>
    </recommendedName>
    <alternativeName>
        <fullName evidence="1">Glutamyl-tRNA synthetase</fullName>
        <shortName evidence="1">GluRS</shortName>
    </alternativeName>
</protein>
<dbReference type="EC" id="6.1.1.17" evidence="1"/>
<dbReference type="EMBL" id="CP001015">
    <property type="protein sequence ID" value="ACF55818.1"/>
    <property type="molecule type" value="Genomic_DNA"/>
</dbReference>
<dbReference type="SMR" id="B5E378"/>
<dbReference type="KEGG" id="spx:SPG_2008"/>
<dbReference type="HOGENOM" id="CLU_015768_6_1_9"/>
<dbReference type="GO" id="GO:0005829">
    <property type="term" value="C:cytosol"/>
    <property type="evidence" value="ECO:0007669"/>
    <property type="project" value="TreeGrafter"/>
</dbReference>
<dbReference type="GO" id="GO:0005524">
    <property type="term" value="F:ATP binding"/>
    <property type="evidence" value="ECO:0007669"/>
    <property type="project" value="UniProtKB-UniRule"/>
</dbReference>
<dbReference type="GO" id="GO:0004818">
    <property type="term" value="F:glutamate-tRNA ligase activity"/>
    <property type="evidence" value="ECO:0007669"/>
    <property type="project" value="UniProtKB-UniRule"/>
</dbReference>
<dbReference type="GO" id="GO:0000049">
    <property type="term" value="F:tRNA binding"/>
    <property type="evidence" value="ECO:0007669"/>
    <property type="project" value="InterPro"/>
</dbReference>
<dbReference type="GO" id="GO:0008270">
    <property type="term" value="F:zinc ion binding"/>
    <property type="evidence" value="ECO:0007669"/>
    <property type="project" value="InterPro"/>
</dbReference>
<dbReference type="GO" id="GO:0006424">
    <property type="term" value="P:glutamyl-tRNA aminoacylation"/>
    <property type="evidence" value="ECO:0007669"/>
    <property type="project" value="UniProtKB-UniRule"/>
</dbReference>
<dbReference type="CDD" id="cd00808">
    <property type="entry name" value="GluRS_core"/>
    <property type="match status" value="1"/>
</dbReference>
<dbReference type="FunFam" id="1.10.10.350:FF:000002">
    <property type="entry name" value="Glutamate--tRNA ligase"/>
    <property type="match status" value="1"/>
</dbReference>
<dbReference type="FunFam" id="3.40.50.620:FF:000007">
    <property type="entry name" value="Glutamate--tRNA ligase"/>
    <property type="match status" value="1"/>
</dbReference>
<dbReference type="Gene3D" id="1.10.10.350">
    <property type="match status" value="1"/>
</dbReference>
<dbReference type="Gene3D" id="3.40.50.620">
    <property type="entry name" value="HUPs"/>
    <property type="match status" value="1"/>
</dbReference>
<dbReference type="HAMAP" id="MF_00022">
    <property type="entry name" value="Glu_tRNA_synth_type1"/>
    <property type="match status" value="1"/>
</dbReference>
<dbReference type="InterPro" id="IPR045462">
    <property type="entry name" value="aa-tRNA-synth_I_cd-bd"/>
</dbReference>
<dbReference type="InterPro" id="IPR020751">
    <property type="entry name" value="aa-tRNA-synth_I_codon-bd_sub2"/>
</dbReference>
<dbReference type="InterPro" id="IPR001412">
    <property type="entry name" value="aa-tRNA-synth_I_CS"/>
</dbReference>
<dbReference type="InterPro" id="IPR008925">
    <property type="entry name" value="aa_tRNA-synth_I_cd-bd_sf"/>
</dbReference>
<dbReference type="InterPro" id="IPR004527">
    <property type="entry name" value="Glu-tRNA-ligase_bac/mito"/>
</dbReference>
<dbReference type="InterPro" id="IPR000924">
    <property type="entry name" value="Glu/Gln-tRNA-synth"/>
</dbReference>
<dbReference type="InterPro" id="IPR020058">
    <property type="entry name" value="Glu/Gln-tRNA-synth_Ib_cat-dom"/>
</dbReference>
<dbReference type="InterPro" id="IPR049940">
    <property type="entry name" value="GluQ/Sye"/>
</dbReference>
<dbReference type="InterPro" id="IPR033910">
    <property type="entry name" value="GluRS_core"/>
</dbReference>
<dbReference type="InterPro" id="IPR014729">
    <property type="entry name" value="Rossmann-like_a/b/a_fold"/>
</dbReference>
<dbReference type="NCBIfam" id="TIGR00464">
    <property type="entry name" value="gltX_bact"/>
    <property type="match status" value="1"/>
</dbReference>
<dbReference type="PANTHER" id="PTHR43311">
    <property type="entry name" value="GLUTAMATE--TRNA LIGASE"/>
    <property type="match status" value="1"/>
</dbReference>
<dbReference type="PANTHER" id="PTHR43311:SF2">
    <property type="entry name" value="GLUTAMATE--TRNA LIGASE, MITOCHONDRIAL-RELATED"/>
    <property type="match status" value="1"/>
</dbReference>
<dbReference type="Pfam" id="PF19269">
    <property type="entry name" value="Anticodon_2"/>
    <property type="match status" value="1"/>
</dbReference>
<dbReference type="Pfam" id="PF00749">
    <property type="entry name" value="tRNA-synt_1c"/>
    <property type="match status" value="1"/>
</dbReference>
<dbReference type="PRINTS" id="PR00987">
    <property type="entry name" value="TRNASYNTHGLU"/>
</dbReference>
<dbReference type="SUPFAM" id="SSF48163">
    <property type="entry name" value="An anticodon-binding domain of class I aminoacyl-tRNA synthetases"/>
    <property type="match status" value="1"/>
</dbReference>
<dbReference type="SUPFAM" id="SSF52374">
    <property type="entry name" value="Nucleotidylyl transferase"/>
    <property type="match status" value="1"/>
</dbReference>
<dbReference type="PROSITE" id="PS00178">
    <property type="entry name" value="AA_TRNA_LIGASE_I"/>
    <property type="match status" value="1"/>
</dbReference>
<organism>
    <name type="scientific">Streptococcus pneumoniae serotype 19F (strain G54)</name>
    <dbReference type="NCBI Taxonomy" id="512566"/>
    <lineage>
        <taxon>Bacteria</taxon>
        <taxon>Bacillati</taxon>
        <taxon>Bacillota</taxon>
        <taxon>Bacilli</taxon>
        <taxon>Lactobacillales</taxon>
        <taxon>Streptococcaceae</taxon>
        <taxon>Streptococcus</taxon>
    </lineage>
</organism>